<sequence>MNLHEYQAKQLFAEFGLPVPEGYACDTPQEAFEAAGRISTAKKVVKCQVHAGGRGKAGGVELHDTKEGVKAFAQKWLGKNLVTYQTDANGQPVSKILVEEASNIANELYLGAVVDRSTRRIVFMASTEGGVEIEKVAEETPELIHKAAIDPLVGPQAYQGRELAFKLGLQGDQIKQFVKIFMGLGEMFAQYDLALLEINPLVITAEGNLLCLDGKINIDSNAMYRQPKLRQMHDASQEDAREAHAAKWELNYVALDGNVGCMVNGAGLAMGTMDIVNLHGGKPANFLDVGGGATKERVAEAFKIILSDTNVKAVLVNIFGGIVRCDMIAEGIIGAVKEVGVSVPVVVRLEGTNAELGRKVLAESGLDIIAAVSLTDAAQKVVAAAEGK</sequence>
<gene>
    <name evidence="1" type="primary">sucC</name>
    <name type="ordered locus">VCM66_2009</name>
</gene>
<evidence type="ECO:0000255" key="1">
    <source>
        <dbReference type="HAMAP-Rule" id="MF_00558"/>
    </source>
</evidence>
<organism>
    <name type="scientific">Vibrio cholerae serotype O1 (strain M66-2)</name>
    <dbReference type="NCBI Taxonomy" id="579112"/>
    <lineage>
        <taxon>Bacteria</taxon>
        <taxon>Pseudomonadati</taxon>
        <taxon>Pseudomonadota</taxon>
        <taxon>Gammaproteobacteria</taxon>
        <taxon>Vibrionales</taxon>
        <taxon>Vibrionaceae</taxon>
        <taxon>Vibrio</taxon>
    </lineage>
</organism>
<reference key="1">
    <citation type="journal article" date="2008" name="PLoS ONE">
        <title>A recalibrated molecular clock and independent origins for the cholera pandemic clones.</title>
        <authorList>
            <person name="Feng L."/>
            <person name="Reeves P.R."/>
            <person name="Lan R."/>
            <person name="Ren Y."/>
            <person name="Gao C."/>
            <person name="Zhou Z."/>
            <person name="Ren Y."/>
            <person name="Cheng J."/>
            <person name="Wang W."/>
            <person name="Wang J."/>
            <person name="Qian W."/>
            <person name="Li D."/>
            <person name="Wang L."/>
        </authorList>
    </citation>
    <scope>NUCLEOTIDE SEQUENCE [LARGE SCALE GENOMIC DNA]</scope>
    <source>
        <strain>M66-2</strain>
    </source>
</reference>
<protein>
    <recommendedName>
        <fullName evidence="1">Succinate--CoA ligase [ADP-forming] subunit beta</fullName>
        <ecNumber evidence="1">6.2.1.5</ecNumber>
    </recommendedName>
    <alternativeName>
        <fullName evidence="1">Succinyl-CoA synthetase subunit beta</fullName>
        <shortName evidence="1">SCS-beta</shortName>
    </alternativeName>
</protein>
<name>SUCC_VIBCM</name>
<dbReference type="EC" id="6.2.1.5" evidence="1"/>
<dbReference type="EMBL" id="CP001233">
    <property type="protein sequence ID" value="ACP06311.1"/>
    <property type="molecule type" value="Genomic_DNA"/>
</dbReference>
<dbReference type="RefSeq" id="WP_001048578.1">
    <property type="nucleotide sequence ID" value="NC_012578.1"/>
</dbReference>
<dbReference type="SMR" id="C3LP35"/>
<dbReference type="GeneID" id="89513929"/>
<dbReference type="KEGG" id="vcm:VCM66_2009"/>
<dbReference type="HOGENOM" id="CLU_037430_0_2_6"/>
<dbReference type="UniPathway" id="UPA00223">
    <property type="reaction ID" value="UER00999"/>
</dbReference>
<dbReference type="Proteomes" id="UP000001217">
    <property type="component" value="Chromosome I"/>
</dbReference>
<dbReference type="GO" id="GO:0005829">
    <property type="term" value="C:cytosol"/>
    <property type="evidence" value="ECO:0007669"/>
    <property type="project" value="TreeGrafter"/>
</dbReference>
<dbReference type="GO" id="GO:0042709">
    <property type="term" value="C:succinate-CoA ligase complex"/>
    <property type="evidence" value="ECO:0007669"/>
    <property type="project" value="TreeGrafter"/>
</dbReference>
<dbReference type="GO" id="GO:0005524">
    <property type="term" value="F:ATP binding"/>
    <property type="evidence" value="ECO:0007669"/>
    <property type="project" value="UniProtKB-UniRule"/>
</dbReference>
<dbReference type="GO" id="GO:0000287">
    <property type="term" value="F:magnesium ion binding"/>
    <property type="evidence" value="ECO:0007669"/>
    <property type="project" value="UniProtKB-UniRule"/>
</dbReference>
<dbReference type="GO" id="GO:0004775">
    <property type="term" value="F:succinate-CoA ligase (ADP-forming) activity"/>
    <property type="evidence" value="ECO:0007669"/>
    <property type="project" value="UniProtKB-UniRule"/>
</dbReference>
<dbReference type="GO" id="GO:0004776">
    <property type="term" value="F:succinate-CoA ligase (GDP-forming) activity"/>
    <property type="evidence" value="ECO:0007669"/>
    <property type="project" value="RHEA"/>
</dbReference>
<dbReference type="GO" id="GO:0006104">
    <property type="term" value="P:succinyl-CoA metabolic process"/>
    <property type="evidence" value="ECO:0007669"/>
    <property type="project" value="TreeGrafter"/>
</dbReference>
<dbReference type="GO" id="GO:0006099">
    <property type="term" value="P:tricarboxylic acid cycle"/>
    <property type="evidence" value="ECO:0007669"/>
    <property type="project" value="UniProtKB-UniRule"/>
</dbReference>
<dbReference type="FunFam" id="3.30.1490.20:FF:000002">
    <property type="entry name" value="Succinate--CoA ligase [ADP-forming] subunit beta"/>
    <property type="match status" value="1"/>
</dbReference>
<dbReference type="FunFam" id="3.30.470.20:FF:000002">
    <property type="entry name" value="Succinate--CoA ligase [ADP-forming] subunit beta"/>
    <property type="match status" value="1"/>
</dbReference>
<dbReference type="FunFam" id="3.40.50.261:FF:000001">
    <property type="entry name" value="Succinate--CoA ligase [ADP-forming] subunit beta"/>
    <property type="match status" value="1"/>
</dbReference>
<dbReference type="Gene3D" id="3.30.1490.20">
    <property type="entry name" value="ATP-grasp fold, A domain"/>
    <property type="match status" value="1"/>
</dbReference>
<dbReference type="Gene3D" id="3.30.470.20">
    <property type="entry name" value="ATP-grasp fold, B domain"/>
    <property type="match status" value="1"/>
</dbReference>
<dbReference type="Gene3D" id="3.40.50.261">
    <property type="entry name" value="Succinyl-CoA synthetase domains"/>
    <property type="match status" value="1"/>
</dbReference>
<dbReference type="HAMAP" id="MF_00558">
    <property type="entry name" value="Succ_CoA_beta"/>
    <property type="match status" value="1"/>
</dbReference>
<dbReference type="InterPro" id="IPR011761">
    <property type="entry name" value="ATP-grasp"/>
</dbReference>
<dbReference type="InterPro" id="IPR013650">
    <property type="entry name" value="ATP-grasp_succ-CoA_synth-type"/>
</dbReference>
<dbReference type="InterPro" id="IPR013815">
    <property type="entry name" value="ATP_grasp_subdomain_1"/>
</dbReference>
<dbReference type="InterPro" id="IPR017866">
    <property type="entry name" value="Succ-CoA_synthase_bsu_CS"/>
</dbReference>
<dbReference type="InterPro" id="IPR005811">
    <property type="entry name" value="SUCC_ACL_C"/>
</dbReference>
<dbReference type="InterPro" id="IPR005809">
    <property type="entry name" value="Succ_CoA_ligase-like_bsu"/>
</dbReference>
<dbReference type="InterPro" id="IPR016102">
    <property type="entry name" value="Succinyl-CoA_synth-like"/>
</dbReference>
<dbReference type="NCBIfam" id="NF001913">
    <property type="entry name" value="PRK00696.1"/>
    <property type="match status" value="1"/>
</dbReference>
<dbReference type="NCBIfam" id="TIGR01016">
    <property type="entry name" value="sucCoAbeta"/>
    <property type="match status" value="1"/>
</dbReference>
<dbReference type="PANTHER" id="PTHR11815:SF10">
    <property type="entry name" value="SUCCINATE--COA LIGASE [GDP-FORMING] SUBUNIT BETA, MITOCHONDRIAL"/>
    <property type="match status" value="1"/>
</dbReference>
<dbReference type="PANTHER" id="PTHR11815">
    <property type="entry name" value="SUCCINYL-COA SYNTHETASE BETA CHAIN"/>
    <property type="match status" value="1"/>
</dbReference>
<dbReference type="Pfam" id="PF08442">
    <property type="entry name" value="ATP-grasp_2"/>
    <property type="match status" value="1"/>
</dbReference>
<dbReference type="Pfam" id="PF00549">
    <property type="entry name" value="Ligase_CoA"/>
    <property type="match status" value="1"/>
</dbReference>
<dbReference type="PIRSF" id="PIRSF001554">
    <property type="entry name" value="SucCS_beta"/>
    <property type="match status" value="1"/>
</dbReference>
<dbReference type="SUPFAM" id="SSF56059">
    <property type="entry name" value="Glutathione synthetase ATP-binding domain-like"/>
    <property type="match status" value="1"/>
</dbReference>
<dbReference type="SUPFAM" id="SSF52210">
    <property type="entry name" value="Succinyl-CoA synthetase domains"/>
    <property type="match status" value="1"/>
</dbReference>
<dbReference type="PROSITE" id="PS50975">
    <property type="entry name" value="ATP_GRASP"/>
    <property type="match status" value="1"/>
</dbReference>
<dbReference type="PROSITE" id="PS01217">
    <property type="entry name" value="SUCCINYL_COA_LIG_3"/>
    <property type="match status" value="1"/>
</dbReference>
<accession>C3LP35</accession>
<proteinExistence type="inferred from homology"/>
<feature type="chain" id="PRO_1000197718" description="Succinate--CoA ligase [ADP-forming] subunit beta">
    <location>
        <begin position="1"/>
        <end position="388"/>
    </location>
</feature>
<feature type="domain" description="ATP-grasp" evidence="1">
    <location>
        <begin position="9"/>
        <end position="244"/>
    </location>
</feature>
<feature type="binding site" evidence="1">
    <location>
        <position position="46"/>
    </location>
    <ligand>
        <name>ATP</name>
        <dbReference type="ChEBI" id="CHEBI:30616"/>
    </ligand>
</feature>
<feature type="binding site" evidence="1">
    <location>
        <begin position="53"/>
        <end position="55"/>
    </location>
    <ligand>
        <name>ATP</name>
        <dbReference type="ChEBI" id="CHEBI:30616"/>
    </ligand>
</feature>
<feature type="binding site" evidence="1">
    <location>
        <position position="99"/>
    </location>
    <ligand>
        <name>ATP</name>
        <dbReference type="ChEBI" id="CHEBI:30616"/>
    </ligand>
</feature>
<feature type="binding site" evidence="1">
    <location>
        <position position="102"/>
    </location>
    <ligand>
        <name>ATP</name>
        <dbReference type="ChEBI" id="CHEBI:30616"/>
    </ligand>
</feature>
<feature type="binding site" evidence="1">
    <location>
        <position position="107"/>
    </location>
    <ligand>
        <name>ATP</name>
        <dbReference type="ChEBI" id="CHEBI:30616"/>
    </ligand>
</feature>
<feature type="binding site" evidence="1">
    <location>
        <position position="199"/>
    </location>
    <ligand>
        <name>Mg(2+)</name>
        <dbReference type="ChEBI" id="CHEBI:18420"/>
    </ligand>
</feature>
<feature type="binding site" evidence="1">
    <location>
        <position position="213"/>
    </location>
    <ligand>
        <name>Mg(2+)</name>
        <dbReference type="ChEBI" id="CHEBI:18420"/>
    </ligand>
</feature>
<feature type="binding site" evidence="1">
    <location>
        <position position="264"/>
    </location>
    <ligand>
        <name>substrate</name>
        <note>ligand shared with subunit alpha</note>
    </ligand>
</feature>
<feature type="binding site" evidence="1">
    <location>
        <begin position="321"/>
        <end position="323"/>
    </location>
    <ligand>
        <name>substrate</name>
        <note>ligand shared with subunit alpha</note>
    </ligand>
</feature>
<comment type="function">
    <text evidence="1">Succinyl-CoA synthetase functions in the citric acid cycle (TCA), coupling the hydrolysis of succinyl-CoA to the synthesis of either ATP or GTP and thus represents the only step of substrate-level phosphorylation in the TCA. The beta subunit provides nucleotide specificity of the enzyme and binds the substrate succinate, while the binding sites for coenzyme A and phosphate are found in the alpha subunit.</text>
</comment>
<comment type="catalytic activity">
    <reaction evidence="1">
        <text>succinate + ATP + CoA = succinyl-CoA + ADP + phosphate</text>
        <dbReference type="Rhea" id="RHEA:17661"/>
        <dbReference type="ChEBI" id="CHEBI:30031"/>
        <dbReference type="ChEBI" id="CHEBI:30616"/>
        <dbReference type="ChEBI" id="CHEBI:43474"/>
        <dbReference type="ChEBI" id="CHEBI:57287"/>
        <dbReference type="ChEBI" id="CHEBI:57292"/>
        <dbReference type="ChEBI" id="CHEBI:456216"/>
        <dbReference type="EC" id="6.2.1.5"/>
    </reaction>
    <physiologicalReaction direction="right-to-left" evidence="1">
        <dbReference type="Rhea" id="RHEA:17663"/>
    </physiologicalReaction>
</comment>
<comment type="catalytic activity">
    <reaction evidence="1">
        <text>GTP + succinate + CoA = succinyl-CoA + GDP + phosphate</text>
        <dbReference type="Rhea" id="RHEA:22120"/>
        <dbReference type="ChEBI" id="CHEBI:30031"/>
        <dbReference type="ChEBI" id="CHEBI:37565"/>
        <dbReference type="ChEBI" id="CHEBI:43474"/>
        <dbReference type="ChEBI" id="CHEBI:57287"/>
        <dbReference type="ChEBI" id="CHEBI:57292"/>
        <dbReference type="ChEBI" id="CHEBI:58189"/>
    </reaction>
    <physiologicalReaction direction="right-to-left" evidence="1">
        <dbReference type="Rhea" id="RHEA:22122"/>
    </physiologicalReaction>
</comment>
<comment type="cofactor">
    <cofactor evidence="1">
        <name>Mg(2+)</name>
        <dbReference type="ChEBI" id="CHEBI:18420"/>
    </cofactor>
    <text evidence="1">Binds 1 Mg(2+) ion per subunit.</text>
</comment>
<comment type="pathway">
    <text evidence="1">Carbohydrate metabolism; tricarboxylic acid cycle; succinate from succinyl-CoA (ligase route): step 1/1.</text>
</comment>
<comment type="subunit">
    <text evidence="1">Heterotetramer of two alpha and two beta subunits.</text>
</comment>
<comment type="similarity">
    <text evidence="1">Belongs to the succinate/malate CoA ligase beta subunit family.</text>
</comment>
<keyword id="KW-0067">ATP-binding</keyword>
<keyword id="KW-0436">Ligase</keyword>
<keyword id="KW-0460">Magnesium</keyword>
<keyword id="KW-0479">Metal-binding</keyword>
<keyword id="KW-0547">Nucleotide-binding</keyword>
<keyword id="KW-0816">Tricarboxylic acid cycle</keyword>